<proteinExistence type="inferred from homology"/>
<accession>Q4L5Z9</accession>
<keyword id="KW-0067">ATP-binding</keyword>
<keyword id="KW-0227">DNA damage</keyword>
<keyword id="KW-0234">DNA repair</keyword>
<keyword id="KW-0238">DNA-binding</keyword>
<keyword id="KW-0547">Nucleotide-binding</keyword>
<gene>
    <name evidence="1" type="primary">mutS</name>
    <name type="ordered locus">SH1617</name>
</gene>
<dbReference type="EMBL" id="AP006716">
    <property type="protein sequence ID" value="BAE04926.1"/>
    <property type="molecule type" value="Genomic_DNA"/>
</dbReference>
<dbReference type="RefSeq" id="WP_011275903.1">
    <property type="nucleotide sequence ID" value="NC_007168.1"/>
</dbReference>
<dbReference type="SMR" id="Q4L5Z9"/>
<dbReference type="GeneID" id="93780996"/>
<dbReference type="KEGG" id="sha:SH1617"/>
<dbReference type="eggNOG" id="COG0249">
    <property type="taxonomic scope" value="Bacteria"/>
</dbReference>
<dbReference type="HOGENOM" id="CLU_002472_3_1_9"/>
<dbReference type="OrthoDB" id="9802448at2"/>
<dbReference type="Proteomes" id="UP000000543">
    <property type="component" value="Chromosome"/>
</dbReference>
<dbReference type="GO" id="GO:0005829">
    <property type="term" value="C:cytosol"/>
    <property type="evidence" value="ECO:0007669"/>
    <property type="project" value="TreeGrafter"/>
</dbReference>
<dbReference type="GO" id="GO:0005524">
    <property type="term" value="F:ATP binding"/>
    <property type="evidence" value="ECO:0007669"/>
    <property type="project" value="UniProtKB-UniRule"/>
</dbReference>
<dbReference type="GO" id="GO:0140664">
    <property type="term" value="F:ATP-dependent DNA damage sensor activity"/>
    <property type="evidence" value="ECO:0007669"/>
    <property type="project" value="InterPro"/>
</dbReference>
<dbReference type="GO" id="GO:0003684">
    <property type="term" value="F:damaged DNA binding"/>
    <property type="evidence" value="ECO:0007669"/>
    <property type="project" value="UniProtKB-UniRule"/>
</dbReference>
<dbReference type="GO" id="GO:0030983">
    <property type="term" value="F:mismatched DNA binding"/>
    <property type="evidence" value="ECO:0007669"/>
    <property type="project" value="InterPro"/>
</dbReference>
<dbReference type="GO" id="GO:0006298">
    <property type="term" value="P:mismatch repair"/>
    <property type="evidence" value="ECO:0007669"/>
    <property type="project" value="UniProtKB-UniRule"/>
</dbReference>
<dbReference type="CDD" id="cd03284">
    <property type="entry name" value="ABC_MutS1"/>
    <property type="match status" value="1"/>
</dbReference>
<dbReference type="FunFam" id="1.10.1420.10:FF:000007">
    <property type="entry name" value="DNA mismatch repair protein MutS"/>
    <property type="match status" value="1"/>
</dbReference>
<dbReference type="FunFam" id="3.40.1170.10:FF:000001">
    <property type="entry name" value="DNA mismatch repair protein MutS"/>
    <property type="match status" value="1"/>
</dbReference>
<dbReference type="FunFam" id="3.40.50.300:FF:000896">
    <property type="entry name" value="DNA mismatch repair protein MutS"/>
    <property type="match status" value="1"/>
</dbReference>
<dbReference type="Gene3D" id="1.10.1420.10">
    <property type="match status" value="2"/>
</dbReference>
<dbReference type="Gene3D" id="3.40.1170.10">
    <property type="entry name" value="DNA repair protein MutS, domain I"/>
    <property type="match status" value="1"/>
</dbReference>
<dbReference type="Gene3D" id="3.30.420.110">
    <property type="entry name" value="MutS, connector domain"/>
    <property type="match status" value="1"/>
</dbReference>
<dbReference type="Gene3D" id="3.40.50.300">
    <property type="entry name" value="P-loop containing nucleotide triphosphate hydrolases"/>
    <property type="match status" value="1"/>
</dbReference>
<dbReference type="HAMAP" id="MF_00096">
    <property type="entry name" value="MutS"/>
    <property type="match status" value="1"/>
</dbReference>
<dbReference type="InterPro" id="IPR005748">
    <property type="entry name" value="DNA_mismatch_repair_MutS"/>
</dbReference>
<dbReference type="InterPro" id="IPR007695">
    <property type="entry name" value="DNA_mismatch_repair_MutS-lik_N"/>
</dbReference>
<dbReference type="InterPro" id="IPR017261">
    <property type="entry name" value="DNA_mismatch_repair_MutS/MSH"/>
</dbReference>
<dbReference type="InterPro" id="IPR000432">
    <property type="entry name" value="DNA_mismatch_repair_MutS_C"/>
</dbReference>
<dbReference type="InterPro" id="IPR007861">
    <property type="entry name" value="DNA_mismatch_repair_MutS_clamp"/>
</dbReference>
<dbReference type="InterPro" id="IPR007696">
    <property type="entry name" value="DNA_mismatch_repair_MutS_core"/>
</dbReference>
<dbReference type="InterPro" id="IPR016151">
    <property type="entry name" value="DNA_mismatch_repair_MutS_N"/>
</dbReference>
<dbReference type="InterPro" id="IPR036187">
    <property type="entry name" value="DNA_mismatch_repair_MutS_sf"/>
</dbReference>
<dbReference type="InterPro" id="IPR007860">
    <property type="entry name" value="DNA_mmatch_repair_MutS_con_dom"/>
</dbReference>
<dbReference type="InterPro" id="IPR045076">
    <property type="entry name" value="MutS"/>
</dbReference>
<dbReference type="InterPro" id="IPR036678">
    <property type="entry name" value="MutS_con_dom_sf"/>
</dbReference>
<dbReference type="InterPro" id="IPR027417">
    <property type="entry name" value="P-loop_NTPase"/>
</dbReference>
<dbReference type="NCBIfam" id="TIGR01070">
    <property type="entry name" value="mutS1"/>
    <property type="match status" value="1"/>
</dbReference>
<dbReference type="NCBIfam" id="NF003810">
    <property type="entry name" value="PRK05399.1"/>
    <property type="match status" value="1"/>
</dbReference>
<dbReference type="PANTHER" id="PTHR11361:SF34">
    <property type="entry name" value="DNA MISMATCH REPAIR PROTEIN MSH1, MITOCHONDRIAL"/>
    <property type="match status" value="1"/>
</dbReference>
<dbReference type="PANTHER" id="PTHR11361">
    <property type="entry name" value="DNA MISMATCH REPAIR PROTEIN MUTS FAMILY MEMBER"/>
    <property type="match status" value="1"/>
</dbReference>
<dbReference type="Pfam" id="PF01624">
    <property type="entry name" value="MutS_I"/>
    <property type="match status" value="1"/>
</dbReference>
<dbReference type="Pfam" id="PF05188">
    <property type="entry name" value="MutS_II"/>
    <property type="match status" value="1"/>
</dbReference>
<dbReference type="Pfam" id="PF05192">
    <property type="entry name" value="MutS_III"/>
    <property type="match status" value="1"/>
</dbReference>
<dbReference type="Pfam" id="PF05190">
    <property type="entry name" value="MutS_IV"/>
    <property type="match status" value="1"/>
</dbReference>
<dbReference type="Pfam" id="PF00488">
    <property type="entry name" value="MutS_V"/>
    <property type="match status" value="1"/>
</dbReference>
<dbReference type="PIRSF" id="PIRSF037677">
    <property type="entry name" value="DNA_mis_repair_Msh6"/>
    <property type="match status" value="1"/>
</dbReference>
<dbReference type="SMART" id="SM00534">
    <property type="entry name" value="MUTSac"/>
    <property type="match status" value="1"/>
</dbReference>
<dbReference type="SMART" id="SM00533">
    <property type="entry name" value="MUTSd"/>
    <property type="match status" value="1"/>
</dbReference>
<dbReference type="SUPFAM" id="SSF55271">
    <property type="entry name" value="DNA repair protein MutS, domain I"/>
    <property type="match status" value="1"/>
</dbReference>
<dbReference type="SUPFAM" id="SSF53150">
    <property type="entry name" value="DNA repair protein MutS, domain II"/>
    <property type="match status" value="1"/>
</dbReference>
<dbReference type="SUPFAM" id="SSF48334">
    <property type="entry name" value="DNA repair protein MutS, domain III"/>
    <property type="match status" value="1"/>
</dbReference>
<dbReference type="SUPFAM" id="SSF52540">
    <property type="entry name" value="P-loop containing nucleoside triphosphate hydrolases"/>
    <property type="match status" value="1"/>
</dbReference>
<dbReference type="PROSITE" id="PS00486">
    <property type="entry name" value="DNA_MISMATCH_REPAIR_2"/>
    <property type="match status" value="1"/>
</dbReference>
<feature type="chain" id="PRO_0000224407" description="DNA mismatch repair protein MutS">
    <location>
        <begin position="1"/>
        <end position="883"/>
    </location>
</feature>
<feature type="binding site" evidence="1">
    <location>
        <begin position="602"/>
        <end position="609"/>
    </location>
    <ligand>
        <name>ATP</name>
        <dbReference type="ChEBI" id="CHEBI:30616"/>
    </ligand>
</feature>
<organism>
    <name type="scientific">Staphylococcus haemolyticus (strain JCSC1435)</name>
    <dbReference type="NCBI Taxonomy" id="279808"/>
    <lineage>
        <taxon>Bacteria</taxon>
        <taxon>Bacillati</taxon>
        <taxon>Bacillota</taxon>
        <taxon>Bacilli</taxon>
        <taxon>Bacillales</taxon>
        <taxon>Staphylococcaceae</taxon>
        <taxon>Staphylococcus</taxon>
    </lineage>
</organism>
<sequence>MSNTTPMMQQYLKIKSQYQDCLLFFRLGDFYEMFFEDAKEASRVLEITLTKRDAKKENPIPMCGVPYHSANSYIETLINNGYKVAICEQMEDPKQTKGMVKREVVRVVTPGTVMEQGGMDENQNNYILSFIKQDSNYALSYCDISTGELKATQIEDEDTLINEIVTINPNEIVVNQEIDENLKKQIYLTTETITIRESISDASYEVNQLTNNHMYLATQLLLDYVYHTQKRDLSHLETAITYAAVDFMKMDYYAKRNLELTESIRLKSKKGTLLWLMDETKTPMGARRLKQWIDRPLINKERIEERLSIVESFMNHFIERDTLRGYLNQVYDIERLVGRVSYGNVNARDLIQLKHSISEIPNIKSLLESMNDVASNQFSSLEPLEDLLQVLEDSLIEEPPISIKDGGLFKQGFSKQLDEYLEASKNGKDWLAQLQAKERERTGIKSLKISFNKVFGYFIEITRANLQGFEPSKFGYHRKQTLSNAERFITDELKEKEDIILGAEDKAVDLEYQLFVRLREHIKTYTERLQKQAKIISELDCLQSFAEIAQKYNYVKPEFSDNKTLSLENSRHPVVERVMDYNDYVPNDCKLDKDNFIYLITGPNMSGKSTYMRQVAIISIMAQMGAYVPCNKAELPIFDQIFTRIGAADDLVSGKSTFMVEMLEAQKALTYATEDSLIIFDEIGRGTSTYDGLALAQAMIEYVAQTSHAKTLFSTHYHELTTLDQELPSLKNVHVAADEYQGELIFLHKVKDGAVDDSYGIQVAKLANLPDEVINRAQVILDAFEQSQNTSDNEEHSNITVLKDSASVEGFTDDDAQNANNSDKKSQTTKNAIENEFEQASFNLFDSEAMTSEIEEQIKNLNISNMTPIEALLKLSELQNQLR</sequence>
<comment type="function">
    <text evidence="1">This protein is involved in the repair of mismatches in DNA. It is possible that it carries out the mismatch recognition step. This protein has a weak ATPase activity.</text>
</comment>
<comment type="similarity">
    <text evidence="1">Belongs to the DNA mismatch repair MutS family.</text>
</comment>
<reference key="1">
    <citation type="journal article" date="2005" name="J. Bacteriol.">
        <title>Whole-genome sequencing of Staphylococcus haemolyticus uncovers the extreme plasticity of its genome and the evolution of human-colonizing staphylococcal species.</title>
        <authorList>
            <person name="Takeuchi F."/>
            <person name="Watanabe S."/>
            <person name="Baba T."/>
            <person name="Yuzawa H."/>
            <person name="Ito T."/>
            <person name="Morimoto Y."/>
            <person name="Kuroda M."/>
            <person name="Cui L."/>
            <person name="Takahashi M."/>
            <person name="Ankai A."/>
            <person name="Baba S."/>
            <person name="Fukui S."/>
            <person name="Lee J.C."/>
            <person name="Hiramatsu K."/>
        </authorList>
    </citation>
    <scope>NUCLEOTIDE SEQUENCE [LARGE SCALE GENOMIC DNA]</scope>
    <source>
        <strain>JCSC1435</strain>
    </source>
</reference>
<protein>
    <recommendedName>
        <fullName evidence="1">DNA mismatch repair protein MutS</fullName>
    </recommendedName>
</protein>
<evidence type="ECO:0000255" key="1">
    <source>
        <dbReference type="HAMAP-Rule" id="MF_00096"/>
    </source>
</evidence>
<name>MUTS_STAHJ</name>